<keyword id="KW-0002">3D-structure</keyword>
<keyword id="KW-0903">Direct protein sequencing</keyword>
<keyword id="KW-0293">Fruiting body</keyword>
<keyword id="KW-0430">Lectin</keyword>
<keyword id="KW-0677">Repeat</keyword>
<sequence length="313" mass="33529">MPTEFLYTSKIAAISWAATGGRQQRVYFQDLNGKIREAQRGGDNPWTGGSSQNVIGEAKLFSPLAAVTWKSAQGIQIRVYCVNKDNILSEFVYDGSKWITGQLGSVGVKVGSNSKLAALQWGGSESAPPNIRVYYQKSNGSGSSIHEYVWSGKWTAGASFGSTVPGTGIGATAIGPGRLRIYYQATDNKIREHCWDSNSWYVGGFSASASAGVSIAAISWGSTPNIRVYWQKGREELYEAAYGGSWNTPGQIKDASRPTPSLPDTFIAANSSGNIDISVFFQASGVSLQQWQWISGKGWSIGAVVPTGTPAGW</sequence>
<evidence type="ECO:0000269" key="1">
    <source>
    </source>
</evidence>
<evidence type="ECO:0000269" key="2">
    <source>
    </source>
</evidence>
<evidence type="ECO:0000269" key="3">
    <source>
    </source>
</evidence>
<evidence type="ECO:0000269" key="4">
    <source>
    </source>
</evidence>
<evidence type="ECO:0000269" key="5">
    <source>
    </source>
</evidence>
<evidence type="ECO:0000269" key="6">
    <source>
    </source>
</evidence>
<evidence type="ECO:0000269" key="7">
    <source>
    </source>
</evidence>
<evidence type="ECO:0000269" key="8">
    <source>
    </source>
</evidence>
<evidence type="ECO:0000269" key="9">
    <source>
    </source>
</evidence>
<evidence type="ECO:0000269" key="10">
    <source>
    </source>
</evidence>
<evidence type="ECO:0000269" key="11">
    <source>
    </source>
</evidence>
<evidence type="ECO:0000269" key="12">
    <source>
    </source>
</evidence>
<evidence type="ECO:0000269" key="13">
    <source>
    </source>
</evidence>
<evidence type="ECO:0000269" key="14">
    <source>
    </source>
</evidence>
<evidence type="ECO:0000269" key="15">
    <source>
    </source>
</evidence>
<evidence type="ECO:0000269" key="16">
    <source>
    </source>
</evidence>
<evidence type="ECO:0000269" key="17">
    <source>
    </source>
</evidence>
<evidence type="ECO:0000303" key="18">
    <source>
    </source>
</evidence>
<evidence type="ECO:0000305" key="19"/>
<evidence type="ECO:0000305" key="20">
    <source>
    </source>
</evidence>
<evidence type="ECO:0000305" key="21">
    <source>
    </source>
</evidence>
<evidence type="ECO:0000305" key="22">
    <source>
    </source>
</evidence>
<evidence type="ECO:0007744" key="23">
    <source>
        <dbReference type="PDB" id="1IUB"/>
    </source>
</evidence>
<evidence type="ECO:0007744" key="24">
    <source>
        <dbReference type="PDB" id="1IUC"/>
    </source>
</evidence>
<evidence type="ECO:0007744" key="25">
    <source>
        <dbReference type="PDB" id="1OFZ"/>
    </source>
</evidence>
<evidence type="ECO:0007829" key="26">
    <source>
        <dbReference type="PDB" id="1IUC"/>
    </source>
</evidence>
<evidence type="ECO:0007829" key="27">
    <source>
        <dbReference type="PDB" id="1OFZ"/>
    </source>
</evidence>
<evidence type="ECO:0007829" key="28">
    <source>
        <dbReference type="PDB" id="6GKE"/>
    </source>
</evidence>
<comment type="function">
    <text evidence="1 2 3 4 5 6 7 8 9 10 13 14 16 17">Lectin that specifically binds to L-fucose (PubMed:12732625, PubMed:14503859, PubMed:18493851, PubMed:2193930, PubMed:21945439, PubMed:2666154, PubMed:27650323, PubMed:28800497, PubMed:7397108). Has strongest preference for the alpha-1,6-fucosylated chain (core fucose) on glycoproteins among alpha-1,2-, alpha-1,3-, alpha-1,4-, and alpha-1,6-fucosylated chains (PubMed:17383961, PubMed:19109923, PubMed:20798114, PubMed:22226468). Might play a role in the differentiation of the fruiting body (PubMed:2193930). Exhibits antifungal activity against Mucor racemosus and thus could act as an antifungal protein in natural ecosystems (PubMed:22738968).</text>
</comment>
<comment type="subunit">
    <text evidence="1 6 7 17">Forms homodimers (PubMed:12732625, PubMed:20798114, PubMed:2193930, PubMed:7397108). The two AAL monomers are associated via interactions between N-terminal and C-terminal peptides (PubMed:12732625). Tyr-7 interacts via aromatic ring stacking with its counterpart on the other monomer, whereas Ser-284 interacts via hydrogen bonding with Asp-264 on the other monomer (PubMed:12732625).</text>
</comment>
<comment type="developmental stage">
    <text evidence="7">AAL is detected in fruiting bodies but not in mycelia (PubMed:2193930).</text>
</comment>
<comment type="domain">
    <text evidence="1 2 4">AAL adopts the six-bladed beta-propeller fold and contains 5 binding sites per monomer, each located between two adjacent blades (PubMed:12732625, PubMed:14503859). Residues conserved at 5 of the 6 sites, are located on the surface of the AAL and directly contribute to fucose recognition (PubMed:14503859). Because the corresponding residues forming site 6 are not conserved, this site cannot be considered to accommodate fucose molecules (PubMed:14503859). The 5 binding sites that are non-equivalent, and owing to minor differences in amino-acid composition they exhibit a marked difference in specific ligand recognition (PubMed:12732625, PubMed:18493851).</text>
</comment>
<comment type="biotechnology">
    <text evidence="11 12 14 15">AAL's binding activity could be used to identify secreted fucosylated glycoproteins that may represent candidate biomarkers for cancer since fucosylation of N-linked glycans has been associated with several types of cancer such as liver cancer (PubMed:22789673, PubMed:24027776, PubMed:27650323). Identified as one of the several suitable fluorescently labeled lectins that can be used in a combination for the visualization and quantification of extracellular glycoconjugates in dental supragingival biofilms grown for 48 hours in situ in the absence of dietary carbohydrates (PubMed:28748044).</text>
</comment>
<comment type="similarity">
    <text evidence="19">Belongs to the fungal fucose-specific lectin family.</text>
</comment>
<dbReference type="EMBL" id="D00573">
    <property type="protein sequence ID" value="BAA00451.1"/>
    <property type="molecule type" value="mRNA"/>
</dbReference>
<dbReference type="EMBL" id="D85776">
    <property type="protein sequence ID" value="BAA12871.1"/>
    <property type="molecule type" value="Genomic_DNA"/>
</dbReference>
<dbReference type="PIR" id="JX0096">
    <property type="entry name" value="JX0096"/>
</dbReference>
<dbReference type="PDB" id="1IUB">
    <property type="method" value="X-ray"/>
    <property type="resolution" value="2.31 A"/>
    <property type="chains" value="A=2-313"/>
</dbReference>
<dbReference type="PDB" id="1IUC">
    <property type="method" value="X-ray"/>
    <property type="resolution" value="2.24 A"/>
    <property type="chains" value="A=2-313"/>
</dbReference>
<dbReference type="PDB" id="1OFZ">
    <property type="method" value="X-ray"/>
    <property type="resolution" value="1.50 A"/>
    <property type="chains" value="A/B=2-313"/>
</dbReference>
<dbReference type="PDB" id="5MXC">
    <property type="method" value="X-ray"/>
    <property type="resolution" value="1.14 A"/>
    <property type="chains" value="A=1-313"/>
</dbReference>
<dbReference type="PDB" id="6GKE">
    <property type="method" value="X-ray"/>
    <property type="resolution" value="1.08 A"/>
    <property type="chains" value="A=2-313"/>
</dbReference>
<dbReference type="PDBsum" id="1IUB"/>
<dbReference type="PDBsum" id="1IUC"/>
<dbReference type="PDBsum" id="1OFZ"/>
<dbReference type="PDBsum" id="5MXC"/>
<dbReference type="PDBsum" id="6GKE"/>
<dbReference type="SMR" id="P18891"/>
<dbReference type="UniLectin" id="P18891"/>
<dbReference type="EvolutionaryTrace" id="P18891"/>
<dbReference type="GO" id="GO:0030246">
    <property type="term" value="F:carbohydrate binding"/>
    <property type="evidence" value="ECO:0000314"/>
    <property type="project" value="UniProtKB"/>
</dbReference>
<dbReference type="GO" id="GO:0042806">
    <property type="term" value="F:fucose binding"/>
    <property type="evidence" value="ECO:0000314"/>
    <property type="project" value="UniProtKB"/>
</dbReference>
<dbReference type="GO" id="GO:0042802">
    <property type="term" value="F:identical protein binding"/>
    <property type="evidence" value="ECO:0000314"/>
    <property type="project" value="UniProtKB"/>
</dbReference>
<dbReference type="GO" id="GO:0042803">
    <property type="term" value="F:protein homodimerization activity"/>
    <property type="evidence" value="ECO:0000314"/>
    <property type="project" value="UniProtKB"/>
</dbReference>
<dbReference type="GO" id="GO:0050832">
    <property type="term" value="P:defense response to fungus"/>
    <property type="evidence" value="ECO:0000314"/>
    <property type="project" value="UniProtKB"/>
</dbReference>
<dbReference type="GO" id="GO:0030582">
    <property type="term" value="P:reproductive fruiting body development"/>
    <property type="evidence" value="ECO:0000270"/>
    <property type="project" value="UniProtKB"/>
</dbReference>
<dbReference type="Gene3D" id="2.120.10.70">
    <property type="entry name" value="Fucose-specific lectin"/>
    <property type="match status" value="1"/>
</dbReference>
<dbReference type="InterPro" id="IPR012475">
    <property type="entry name" value="Fungal_lectin"/>
</dbReference>
<dbReference type="Pfam" id="PF07938">
    <property type="entry name" value="Fungal_lectin"/>
    <property type="match status" value="1"/>
</dbReference>
<dbReference type="SUPFAM" id="SSF89372">
    <property type="entry name" value="Fucose-specific lectin"/>
    <property type="match status" value="1"/>
</dbReference>
<accession>P18891</accession>
<protein>
    <recommendedName>
        <fullName evidence="18">Fucose-specific lectin</fullName>
    </recommendedName>
    <alternativeName>
        <fullName evidence="18">Aleuria aurantia lectin</fullName>
        <shortName evidence="18">AAL</shortName>
    </alternativeName>
</protein>
<reference key="1">
    <citation type="journal article" date="1990" name="J. Biochem.">
        <title>Primary structure of a fucose-specific lectin obtained from a mushroom, Aleuria aurantia.</title>
        <authorList>
            <person name="Fukumori F."/>
            <person name="Takeuchi N."/>
            <person name="Hagiwara T."/>
            <person name="Ohbayashi H."/>
            <person name="Endo T."/>
            <person name="Kochibe N."/>
            <person name="Nagata Y."/>
            <person name="Kobata A."/>
        </authorList>
    </citation>
    <scope>NUCLEOTIDE SEQUENCE [MRNA]</scope>
    <scope>FUNCTION</scope>
    <scope>SUBUNIT</scope>
    <scope>DEVELOPMENTAL STAGE</scope>
</reference>
<reference key="2">
    <citation type="submission" date="1996-06" db="EMBL/GenBank/DDBJ databases">
        <authorList>
            <person name="Ogawa S."/>
            <person name="Ando A."/>
            <person name="Nagata Y."/>
        </authorList>
    </citation>
    <scope>NUCLEOTIDE SEQUENCE [GENOMIC DNA]</scope>
</reference>
<reference key="3">
    <citation type="journal article" date="1989" name="FEBS Lett.">
        <title>Cloning and expression of a functional fucose-specific lectin from an orange peel mushroom, Aleuria aurantia.</title>
        <authorList>
            <person name="Fukumori F."/>
            <person name="Takeuchi N."/>
            <person name="Hagiwara T."/>
            <person name="Ito K."/>
            <person name="Kochibe N."/>
            <person name="Kobata A."/>
            <person name="Nagata Y."/>
        </authorList>
    </citation>
    <scope>NUCLEOTIDE SEQUENCE [MRNA] OF 4-31</scope>
    <scope>PROTEIN SEQUENCE OF 2-31</scope>
    <scope>FUNCTION</scope>
</reference>
<reference key="4">
    <citation type="journal article" date="1980" name="Biochemistry">
        <title>Purification and properties of a novel fucose-specific hemagglutinin of Aleuria aurantia.</title>
        <authorList>
            <person name="Kochibe N."/>
            <person name="Furukawa K."/>
        </authorList>
    </citation>
    <scope>FUNCTION</scope>
    <scope>SUBUNIT</scope>
</reference>
<reference key="5">
    <citation type="journal article" date="2007" name="J. Biol. Chem.">
        <title>Carbohydrate binding specificity of a fucose-specific lectin from Aspergillus oryzae: a novel probe for core fucose.</title>
        <authorList>
            <person name="Matsumura K."/>
            <person name="Higashida K."/>
            <person name="Ishida H."/>
            <person name="Hata Y."/>
            <person name="Yamamoto K."/>
            <person name="Shigeta M."/>
            <person name="Mizuno-Horikawa Y."/>
            <person name="Wang X."/>
            <person name="Miyoshi E."/>
            <person name="Gu J."/>
            <person name="Taniguchi N."/>
        </authorList>
    </citation>
    <scope>FUNCTION</scope>
</reference>
<reference key="6">
    <citation type="journal article" date="2008" name="Glycoconj. J.">
        <title>Detection of a high affinity binding site in recombinant Aleuria aurantia lectin.</title>
        <authorList>
            <person name="Olausson J."/>
            <person name="Tibell L."/>
            <person name="Jonsson B.H."/>
            <person name="Paahlsson P."/>
        </authorList>
    </citation>
    <scope>FUNCTION</scope>
    <scope>DOMAIN</scope>
</reference>
<reference key="7">
    <citation type="journal article" date="2009" name="Anal. Biochem.">
        <title>Comparative analysis of oligosaccharide specificities of fucose-specific lectins from Aspergillus oryzae and Aleuria aurantia using frontal affinity chromatography.</title>
        <authorList>
            <person name="Matsumura K."/>
            <person name="Higashida K."/>
            <person name="Hata Y."/>
            <person name="Kominami J."/>
            <person name="Nakamura-Tsuruta S."/>
            <person name="Hirabayashi J."/>
        </authorList>
    </citation>
    <scope>FUNCTION</scope>
</reference>
<reference key="8">
    <citation type="journal article" date="2011" name="Biochem. Biophys. Res. Commun.">
        <title>Development of recombinant Aleuria aurantia lectins with altered binding specificities to fucosylated glycans.</title>
        <authorList>
            <person name="Romano P.R."/>
            <person name="Mackay A."/>
            <person name="Vong M."/>
            <person name="DeSa J."/>
            <person name="Lamontagne A."/>
            <person name="Comunale M.A."/>
            <person name="Hafner J."/>
            <person name="Block T."/>
            <person name="Lec R."/>
            <person name="Mehta A."/>
        </authorList>
    </citation>
    <scope>FUNCTION</scope>
    <scope>MUTAGENESIS OF ASN-225</scope>
</reference>
<reference key="9">
    <citation type="journal article" date="2011" name="Glycobiology">
        <title>Production and characterization of a monomeric form and a single-site form of Aleuria aurantia lectin.</title>
        <authorList>
            <person name="Olausson J."/>
            <person name="Astroem E."/>
            <person name="Jonsson B.H."/>
            <person name="Tibell L.A."/>
            <person name="Paahlsson P."/>
        </authorList>
    </citation>
    <scope>SUBUNIT</scope>
    <scope>MUTAGENESIS OF TYR-7 AND SER-284</scope>
    <scope>FUNCTION</scope>
</reference>
<reference key="10">
    <citation type="journal article" date="2012" name="Biosci. Biotechnol. Biochem.">
        <title>Aleuria aurantia lectin exhibits antifungal activity against Mucor racemosus.</title>
        <authorList>
            <person name="Amano K."/>
            <person name="Katayama H."/>
            <person name="Saito A."/>
            <person name="Ando A."/>
            <person name="Nagata Y."/>
        </authorList>
    </citation>
    <scope>FUNCTION</scope>
</reference>
<reference key="11">
    <citation type="journal article" date="2012" name="J. Chromatogr. B">
        <title>Elucidating the selectivity of recombinant forms of Aleuria aurantia lectin using weak affinity chromatography.</title>
        <authorList>
            <person name="Bergstroem M."/>
            <person name="Astroem E."/>
            <person name="Paahlsson P."/>
            <person name="Ohlson S."/>
        </authorList>
    </citation>
    <scope>FUNCTION</scope>
</reference>
<reference key="12">
    <citation type="journal article" date="2012" name="J. Proteomics">
        <title>A lectin-coupled, targeted proteomic mass spectrometry (MRM MS) platform for identification of multiple liver cancer biomarkers in human plasma.</title>
        <authorList>
            <person name="Ahn Y.H."/>
            <person name="Shin P.M."/>
            <person name="Oh N.R."/>
            <person name="Park G.W."/>
            <person name="Kim H."/>
            <person name="Yoo J.S."/>
        </authorList>
    </citation>
    <scope>BIOTECHNOLOGY</scope>
</reference>
<reference key="13">
    <citation type="journal article" date="2013" name="Analyst">
        <title>Quantitative analysis of aberrant protein glycosylation in liver cancer plasma by AAL-enrichment and MRM mass spectrometry.</title>
        <authorList>
            <person name="Ahn Y.H."/>
            <person name="Shin P.M."/>
            <person name="Kim Y.S."/>
            <person name="Oh N.R."/>
            <person name="Ji E.S."/>
            <person name="Kim K.H."/>
            <person name="Lee Y.J."/>
            <person name="Kim S.H."/>
            <person name="Yoo J.S."/>
        </authorList>
    </citation>
    <scope>BIOTECHNOLOGY</scope>
</reference>
<reference key="14">
    <citation type="journal article" date="2016" name="Proteomics">
        <title>Development and application of a novel recombinant Aleuria aurantia lectin with enhanced core fucose binding for identification of glycoprotein biomarkers of hepatocellular carcinoma.</title>
        <authorList>
            <person name="Norton P."/>
            <person name="Comunale M.A."/>
            <person name="Herrera H."/>
            <person name="Wang M."/>
            <person name="Houser J."/>
            <person name="Wimmerova M."/>
            <person name="Romano P.R."/>
            <person name="Mehta A."/>
        </authorList>
    </citation>
    <scope>FUNCTION</scope>
    <scope>MUTAGENESIS OF ASN-225</scope>
    <scope>BIOTECHNOLOGY</scope>
</reference>
<reference key="15">
    <citation type="journal article" date="2017" name="Carbohydr. Res.">
        <title>Glycoconjugate probes containing a core-fucosylated N-glycan trisaccharide for fucose lectin identification and purification.</title>
        <authorList>
            <person name="Cai D."/>
            <person name="Xun C."/>
            <person name="Tang F."/>
            <person name="Tian X."/>
            <person name="Yang L."/>
            <person name="Ding K."/>
            <person name="Li W."/>
            <person name="Le Z."/>
            <person name="Huang W."/>
        </authorList>
    </citation>
    <scope>FUNCTION</scope>
</reference>
<reference key="16">
    <citation type="journal article" date="2017" name="J. Oral Microbiol.">
        <title>Visualizing the dental biofilm matrix by means of fluorescence lectin-binding analysis.</title>
        <authorList>
            <person name="Tawakoli P.N."/>
            <person name="Neu T.R."/>
            <person name="Busck M.M."/>
            <person name="Kuhlicke U."/>
            <person name="Schramm A."/>
            <person name="Attin T."/>
            <person name="Wiedemeier D.B."/>
            <person name="Schlafer S."/>
        </authorList>
    </citation>
    <scope>BIOTECHNOLOGY</scope>
</reference>
<reference key="17">
    <citation type="journal article" date="2003" name="Biochemistry">
        <title>Crystal structure of fucose-specific lectin from Aleuria aurantia binding ligands at three of its five sugar recognition sites.</title>
        <authorList>
            <person name="Fujihashi M."/>
            <person name="Peapus D.H."/>
            <person name="Kamiya N."/>
            <person name="Nagata Y."/>
            <person name="Miki K."/>
        </authorList>
    </citation>
    <scope>X-RAY CRYSTALLOGRAPHY (2.24 ANGSTROMS) OF 2-313 IN COMPLEX WITH ALPHA-L-FUCOSE AND BETA-L-FUCOSE</scope>
    <scope>FUNCTION</scope>
    <scope>DOMAIN</scope>
</reference>
<reference evidence="25" key="18">
    <citation type="journal article" date="2003" name="J. Biol. Chem.">
        <title>Crystal structure of fungal lectin: six-bladed beta-propeller fold and novel fucose recognition mode for Aleuria aurantia lectin.</title>
        <authorList>
            <person name="Wimmerova M."/>
            <person name="Mitchell E."/>
            <person name="Sanchez J.F."/>
            <person name="Gautier C."/>
            <person name="Imberty A."/>
        </authorList>
    </citation>
    <scope>X-RAY CRYSTALLOGRAPHY (1.50 ANGSTROMS) OF 2-313 IN COMPLEX WITH ALPHA-L-FUCOSE AND BETA-L-FUCOSE</scope>
    <scope>FUNCTION</scope>
    <scope>DOMAIN</scope>
</reference>
<name>LECF_ALEAU</name>
<organism>
    <name type="scientific">Aleuria aurantia</name>
    <name type="common">Orange peel mushroom</name>
    <dbReference type="NCBI Taxonomy" id="5188"/>
    <lineage>
        <taxon>Eukaryota</taxon>
        <taxon>Fungi</taxon>
        <taxon>Dikarya</taxon>
        <taxon>Ascomycota</taxon>
        <taxon>Pezizomycotina</taxon>
        <taxon>Pezizomycetes</taxon>
        <taxon>Pezizales</taxon>
        <taxon>Pyronemataceae</taxon>
        <taxon>Aleuria</taxon>
    </lineage>
</organism>
<feature type="initiator methionine" description="Removed" evidence="13">
    <location>
        <position position="1"/>
    </location>
</feature>
<feature type="chain" id="PRO_0000084401" description="Fucose-specific lectin">
    <location>
        <begin position="2"/>
        <end position="313"/>
    </location>
</feature>
<feature type="repeat" description="1" evidence="20 21 22">
    <location>
        <begin position="5"/>
        <end position="57"/>
    </location>
</feature>
<feature type="repeat" description="2" evidence="20 21 22">
    <location>
        <begin position="58"/>
        <end position="109"/>
    </location>
</feature>
<feature type="repeat" description="3" evidence="20 21 22">
    <location>
        <begin position="110"/>
        <end position="162"/>
    </location>
</feature>
<feature type="repeat" description="4" evidence="20 21 22">
    <location>
        <begin position="163"/>
        <end position="208"/>
    </location>
</feature>
<feature type="repeat" description="5" evidence="20 21 22">
    <location>
        <begin position="209"/>
        <end position="260"/>
    </location>
</feature>
<feature type="repeat" description="6" evidence="20 21 22">
    <location>
        <begin position="261"/>
        <end position="304"/>
    </location>
</feature>
<feature type="region of interest" description="6 X approximate tandem repeats" evidence="20 21 22">
    <location>
        <begin position="5"/>
        <end position="304"/>
    </location>
</feature>
<feature type="binding site" evidence="1 2 24 25">
    <location>
        <position position="25"/>
    </location>
    <ligand>
        <name>beta-L-fucose</name>
        <dbReference type="ChEBI" id="CHEBI:42589"/>
        <label>1</label>
    </ligand>
</feature>
<feature type="binding site" evidence="1 2 24 25">
    <location>
        <position position="37"/>
    </location>
    <ligand>
        <name>beta-L-fucose</name>
        <dbReference type="ChEBI" id="CHEBI:42589"/>
        <label>1</label>
    </ligand>
</feature>
<feature type="binding site" evidence="1 25">
    <location>
        <position position="78"/>
    </location>
    <ligand>
        <name>alpha-L-fucose</name>
        <dbReference type="ChEBI" id="CHEBI:42548"/>
        <label>1</label>
    </ligand>
</feature>
<feature type="binding site" evidence="1 2 24 25">
    <location>
        <position position="78"/>
    </location>
    <ligand>
        <name>beta-L-fucose</name>
        <dbReference type="ChEBI" id="CHEBI:42589"/>
        <label>2</label>
    </ligand>
</feature>
<feature type="binding site" evidence="1 25">
    <location>
        <position position="90"/>
    </location>
    <ligand>
        <name>alpha-L-fucose</name>
        <dbReference type="ChEBI" id="CHEBI:42548"/>
        <label>1</label>
    </ligand>
</feature>
<feature type="binding site" evidence="1 2 24 25">
    <location>
        <position position="90"/>
    </location>
    <ligand>
        <name>beta-L-fucose</name>
        <dbReference type="ChEBI" id="CHEBI:42589"/>
        <label>2</label>
    </ligand>
</feature>
<feature type="binding site" evidence="1 2 24 25">
    <location>
        <position position="98"/>
    </location>
    <ligand>
        <name>beta-L-fucose</name>
        <dbReference type="ChEBI" id="CHEBI:42589"/>
        <label>1</label>
    </ligand>
</feature>
<feature type="binding site" evidence="1 25">
    <location>
        <position position="102"/>
    </location>
    <ligand>
        <name>alpha-L-fucose</name>
        <dbReference type="ChEBI" id="CHEBI:42548"/>
        <label>1</label>
    </ligand>
</feature>
<feature type="binding site" evidence="1 2 23 24 25">
    <location>
        <position position="102"/>
    </location>
    <ligand>
        <name>beta-L-fucose</name>
        <dbReference type="ChEBI" id="CHEBI:42589"/>
        <label>2</label>
    </ligand>
</feature>
<feature type="binding site" evidence="1 25">
    <location>
        <position position="132"/>
    </location>
    <ligand>
        <name>beta-L-fucose</name>
        <dbReference type="ChEBI" id="CHEBI:42589"/>
        <label>3</label>
    </ligand>
</feature>
<feature type="binding site" evidence="1 25">
    <location>
        <position position="147"/>
    </location>
    <ligand>
        <name>beta-L-fucose</name>
        <dbReference type="ChEBI" id="CHEBI:42589"/>
        <label>3</label>
    </ligand>
</feature>
<feature type="binding site" evidence="1 25">
    <location>
        <position position="154"/>
    </location>
    <ligand>
        <name>alpha-L-fucose</name>
        <dbReference type="ChEBI" id="CHEBI:42548"/>
        <label>1</label>
    </ligand>
</feature>
<feature type="binding site" evidence="1 2 24 25">
    <location>
        <position position="154"/>
    </location>
    <ligand>
        <name>beta-L-fucose</name>
        <dbReference type="ChEBI" id="CHEBI:42589"/>
        <label>2</label>
    </ligand>
</feature>
<feature type="binding site" evidence="1 2 24 25">
    <location>
        <position position="180"/>
    </location>
    <ligand>
        <name>alpha-L-fucose</name>
        <dbReference type="ChEBI" id="CHEBI:42548"/>
        <label>2</label>
    </ligand>
</feature>
<feature type="binding site" evidence="1 2 24 25">
    <location>
        <position position="192"/>
    </location>
    <ligand>
        <name>alpha-L-fucose</name>
        <dbReference type="ChEBI" id="CHEBI:42548"/>
        <label>2</label>
    </ligand>
</feature>
<feature type="binding site" evidence="1 25">
    <location>
        <position position="200"/>
    </location>
    <ligand>
        <name>beta-L-fucose</name>
        <dbReference type="ChEBI" id="CHEBI:42589"/>
        <label>3</label>
    </ligand>
</feature>
<feature type="binding site" evidence="1 2 24 25">
    <location>
        <position position="204"/>
    </location>
    <ligand>
        <name>alpha-L-fucose</name>
        <dbReference type="ChEBI" id="CHEBI:42548"/>
        <label>2</label>
    </ligand>
</feature>
<feature type="binding site" evidence="1 25">
    <location>
        <position position="227"/>
    </location>
    <ligand>
        <name>beta-L-fucose</name>
        <dbReference type="ChEBI" id="CHEBI:42589"/>
        <label>4</label>
    </ligand>
</feature>
<feature type="binding site" evidence="1 25">
    <location>
        <position position="239"/>
    </location>
    <ligand>
        <name>beta-L-fucose</name>
        <dbReference type="ChEBI" id="CHEBI:42589"/>
        <label>4</label>
    </ligand>
</feature>
<feature type="binding site" evidence="1 2 24 25">
    <location>
        <position position="246"/>
    </location>
    <ligand>
        <name>alpha-L-fucose</name>
        <dbReference type="ChEBI" id="CHEBI:42548"/>
        <label>2</label>
    </ligand>
</feature>
<feature type="binding site" evidence="1 25">
    <location>
        <position position="299"/>
    </location>
    <ligand>
        <name>beta-L-fucose</name>
        <dbReference type="ChEBI" id="CHEBI:42589"/>
        <label>4</label>
    </ligand>
</feature>
<feature type="mutagenesis site" description="Impairs homodimerization." evidence="6">
    <original>Y</original>
    <variation>R</variation>
    <location>
        <position position="7"/>
    </location>
</feature>
<feature type="mutagenesis site" description="Leads to increased binding to fucosylated glycans." evidence="8 14">
    <original>N</original>
    <variation>Q</variation>
    <location>
        <position position="225"/>
    </location>
</feature>
<feature type="mutagenesis site" description="Impairs homodimerization." evidence="6">
    <original>S</original>
    <variation>D</variation>
    <location>
        <position position="284"/>
    </location>
</feature>
<feature type="strand" evidence="28">
    <location>
        <begin position="11"/>
        <end position="16"/>
    </location>
</feature>
<feature type="strand" evidence="28">
    <location>
        <begin position="23"/>
        <end position="30"/>
    </location>
</feature>
<feature type="strand" evidence="28">
    <location>
        <begin position="33"/>
        <end position="41"/>
    </location>
</feature>
<feature type="helix" evidence="27">
    <location>
        <begin position="51"/>
        <end position="53"/>
    </location>
</feature>
<feature type="strand" evidence="28">
    <location>
        <begin position="54"/>
        <end position="57"/>
    </location>
</feature>
<feature type="strand" evidence="28">
    <location>
        <begin position="65"/>
        <end position="71"/>
    </location>
</feature>
<feature type="strand" evidence="28">
    <location>
        <begin position="74"/>
        <end position="82"/>
    </location>
</feature>
<feature type="strand" evidence="28">
    <location>
        <begin position="87"/>
        <end position="96"/>
    </location>
</feature>
<feature type="strand" evidence="28">
    <location>
        <begin position="98"/>
        <end position="100"/>
    </location>
</feature>
<feature type="helix" evidence="28">
    <location>
        <begin position="102"/>
        <end position="106"/>
    </location>
</feature>
<feature type="strand" evidence="28">
    <location>
        <begin position="117"/>
        <end position="122"/>
    </location>
</feature>
<feature type="strand" evidence="26">
    <location>
        <begin position="124"/>
        <end position="127"/>
    </location>
</feature>
<feature type="strand" evidence="28">
    <location>
        <begin position="130"/>
        <end position="135"/>
    </location>
</feature>
<feature type="strand" evidence="28">
    <location>
        <begin position="143"/>
        <end position="164"/>
    </location>
</feature>
<feature type="strand" evidence="28">
    <location>
        <begin position="169"/>
        <end position="175"/>
    </location>
</feature>
<feature type="strand" evidence="28">
    <location>
        <begin position="178"/>
        <end position="185"/>
    </location>
</feature>
<feature type="strand" evidence="28">
    <location>
        <begin position="188"/>
        <end position="198"/>
    </location>
</feature>
<feature type="strand" evidence="28">
    <location>
        <begin position="200"/>
        <end position="202"/>
    </location>
</feature>
<feature type="strand" evidence="28">
    <location>
        <begin position="214"/>
        <end position="220"/>
    </location>
</feature>
<feature type="turn" evidence="28">
    <location>
        <begin position="221"/>
        <end position="224"/>
    </location>
</feature>
<feature type="strand" evidence="28">
    <location>
        <begin position="225"/>
        <end position="231"/>
    </location>
</feature>
<feature type="strand" evidence="28">
    <location>
        <begin position="237"/>
        <end position="246"/>
    </location>
</feature>
<feature type="strand" evidence="28">
    <location>
        <begin position="250"/>
        <end position="252"/>
    </location>
</feature>
<feature type="strand" evidence="28">
    <location>
        <begin position="268"/>
        <end position="272"/>
    </location>
</feature>
<feature type="turn" evidence="28">
    <location>
        <begin position="273"/>
        <end position="275"/>
    </location>
</feature>
<feature type="strand" evidence="28">
    <location>
        <begin position="276"/>
        <end position="283"/>
    </location>
</feature>
<feature type="turn" evidence="28">
    <location>
        <begin position="284"/>
        <end position="286"/>
    </location>
</feature>
<feature type="strand" evidence="28">
    <location>
        <begin position="287"/>
        <end position="294"/>
    </location>
</feature>
<feature type="turn" evidence="28">
    <location>
        <begin position="295"/>
        <end position="297"/>
    </location>
</feature>
<feature type="strand" evidence="28">
    <location>
        <begin position="298"/>
        <end position="301"/>
    </location>
</feature>
<proteinExistence type="evidence at protein level"/>